<proteinExistence type="inferred from homology"/>
<dbReference type="EMBL" id="BA000045">
    <property type="protein sequence ID" value="BAC91857.1"/>
    <property type="molecule type" value="Genomic_DNA"/>
</dbReference>
<dbReference type="RefSeq" id="NP_926862.1">
    <property type="nucleotide sequence ID" value="NC_005125.1"/>
</dbReference>
<dbReference type="RefSeq" id="WP_011143904.1">
    <property type="nucleotide sequence ID" value="NC_005125.1"/>
</dbReference>
<dbReference type="SMR" id="Q7NEG3"/>
<dbReference type="FunCoup" id="Q7NEG3">
    <property type="interactions" value="143"/>
</dbReference>
<dbReference type="STRING" id="251221.gene:10761433"/>
<dbReference type="EnsemblBacteria" id="BAC91857">
    <property type="protein sequence ID" value="BAC91857"/>
    <property type="gene ID" value="BAC91857"/>
</dbReference>
<dbReference type="KEGG" id="gvi:gll3916"/>
<dbReference type="PATRIC" id="fig|251221.4.peg.3949"/>
<dbReference type="eggNOG" id="COG0198">
    <property type="taxonomic scope" value="Bacteria"/>
</dbReference>
<dbReference type="HOGENOM" id="CLU_093315_2_3_3"/>
<dbReference type="InParanoid" id="Q7NEG3"/>
<dbReference type="OrthoDB" id="9807419at2"/>
<dbReference type="PhylomeDB" id="Q7NEG3"/>
<dbReference type="Proteomes" id="UP000000557">
    <property type="component" value="Chromosome"/>
</dbReference>
<dbReference type="GO" id="GO:0022625">
    <property type="term" value="C:cytosolic large ribosomal subunit"/>
    <property type="evidence" value="ECO:0000318"/>
    <property type="project" value="GO_Central"/>
</dbReference>
<dbReference type="GO" id="GO:0019843">
    <property type="term" value="F:rRNA binding"/>
    <property type="evidence" value="ECO:0007669"/>
    <property type="project" value="UniProtKB-UniRule"/>
</dbReference>
<dbReference type="GO" id="GO:0003735">
    <property type="term" value="F:structural constituent of ribosome"/>
    <property type="evidence" value="ECO:0007669"/>
    <property type="project" value="InterPro"/>
</dbReference>
<dbReference type="GO" id="GO:0006412">
    <property type="term" value="P:translation"/>
    <property type="evidence" value="ECO:0000318"/>
    <property type="project" value="GO_Central"/>
</dbReference>
<dbReference type="CDD" id="cd06089">
    <property type="entry name" value="KOW_RPL26"/>
    <property type="match status" value="1"/>
</dbReference>
<dbReference type="FunFam" id="2.30.30.30:FF:000004">
    <property type="entry name" value="50S ribosomal protein L24"/>
    <property type="match status" value="1"/>
</dbReference>
<dbReference type="Gene3D" id="2.30.30.30">
    <property type="match status" value="1"/>
</dbReference>
<dbReference type="HAMAP" id="MF_01326_B">
    <property type="entry name" value="Ribosomal_uL24_B"/>
    <property type="match status" value="1"/>
</dbReference>
<dbReference type="InterPro" id="IPR005824">
    <property type="entry name" value="KOW"/>
</dbReference>
<dbReference type="InterPro" id="IPR014722">
    <property type="entry name" value="Rib_uL2_dom2"/>
</dbReference>
<dbReference type="InterPro" id="IPR003256">
    <property type="entry name" value="Ribosomal_uL24"/>
</dbReference>
<dbReference type="InterPro" id="IPR005825">
    <property type="entry name" value="Ribosomal_uL24_CS"/>
</dbReference>
<dbReference type="InterPro" id="IPR041988">
    <property type="entry name" value="Ribosomal_uL24_KOW"/>
</dbReference>
<dbReference type="InterPro" id="IPR008991">
    <property type="entry name" value="Translation_prot_SH3-like_sf"/>
</dbReference>
<dbReference type="NCBIfam" id="TIGR01079">
    <property type="entry name" value="rplX_bact"/>
    <property type="match status" value="1"/>
</dbReference>
<dbReference type="PANTHER" id="PTHR12903">
    <property type="entry name" value="MITOCHONDRIAL RIBOSOMAL PROTEIN L24"/>
    <property type="match status" value="1"/>
</dbReference>
<dbReference type="Pfam" id="PF00467">
    <property type="entry name" value="KOW"/>
    <property type="match status" value="1"/>
</dbReference>
<dbReference type="Pfam" id="PF17136">
    <property type="entry name" value="ribosomal_L24"/>
    <property type="match status" value="1"/>
</dbReference>
<dbReference type="SMART" id="SM00739">
    <property type="entry name" value="KOW"/>
    <property type="match status" value="1"/>
</dbReference>
<dbReference type="SUPFAM" id="SSF50104">
    <property type="entry name" value="Translation proteins SH3-like domain"/>
    <property type="match status" value="1"/>
</dbReference>
<dbReference type="PROSITE" id="PS01108">
    <property type="entry name" value="RIBOSOMAL_L24"/>
    <property type="match status" value="1"/>
</dbReference>
<keyword id="KW-1185">Reference proteome</keyword>
<keyword id="KW-0687">Ribonucleoprotein</keyword>
<keyword id="KW-0689">Ribosomal protein</keyword>
<keyword id="KW-0694">RNA-binding</keyword>
<keyword id="KW-0699">rRNA-binding</keyword>
<sequence>MATNNGAGKARHKFHVKKGDTVQVISGKDKGKVGKVSEVLPTAGKVIVEGVNMQTKHVKPQGDQQGQTLRREAPIYSCKVMLYSDKKKQASRVGHTVTDAGKKVRVLKKTGEILDK</sequence>
<protein>
    <recommendedName>
        <fullName evidence="1">Large ribosomal subunit protein uL24</fullName>
    </recommendedName>
    <alternativeName>
        <fullName evidence="3">50S ribosomal protein L24</fullName>
    </alternativeName>
</protein>
<reference key="1">
    <citation type="journal article" date="2003" name="DNA Res.">
        <title>Complete genome structure of Gloeobacter violaceus PCC 7421, a cyanobacterium that lacks thylakoids.</title>
        <authorList>
            <person name="Nakamura Y."/>
            <person name="Kaneko T."/>
            <person name="Sato S."/>
            <person name="Mimuro M."/>
            <person name="Miyashita H."/>
            <person name="Tsuchiya T."/>
            <person name="Sasamoto S."/>
            <person name="Watanabe A."/>
            <person name="Kawashima K."/>
            <person name="Kishida Y."/>
            <person name="Kiyokawa C."/>
            <person name="Kohara M."/>
            <person name="Matsumoto M."/>
            <person name="Matsuno A."/>
            <person name="Nakazaki N."/>
            <person name="Shimpo S."/>
            <person name="Takeuchi C."/>
            <person name="Yamada M."/>
            <person name="Tabata S."/>
        </authorList>
    </citation>
    <scope>NUCLEOTIDE SEQUENCE [LARGE SCALE GENOMIC DNA]</scope>
    <source>
        <strain>ATCC 29082 / PCC 7421</strain>
    </source>
</reference>
<name>RL24_GLOVI</name>
<gene>
    <name evidence="1" type="primary">rplX</name>
    <name evidence="1" type="synonym">rpl24</name>
    <name type="ordered locus">gll3916</name>
</gene>
<feature type="chain" id="PRO_0000130660" description="Large ribosomal subunit protein uL24">
    <location>
        <begin position="1"/>
        <end position="116"/>
    </location>
</feature>
<feature type="region of interest" description="Disordered" evidence="2">
    <location>
        <begin position="1"/>
        <end position="21"/>
    </location>
</feature>
<organism>
    <name type="scientific">Gloeobacter violaceus (strain ATCC 29082 / PCC 7421)</name>
    <dbReference type="NCBI Taxonomy" id="251221"/>
    <lineage>
        <taxon>Bacteria</taxon>
        <taxon>Bacillati</taxon>
        <taxon>Cyanobacteriota</taxon>
        <taxon>Cyanophyceae</taxon>
        <taxon>Gloeobacterales</taxon>
        <taxon>Gloeobacteraceae</taxon>
        <taxon>Gloeobacter</taxon>
    </lineage>
</organism>
<accession>Q7NEG3</accession>
<evidence type="ECO:0000255" key="1">
    <source>
        <dbReference type="HAMAP-Rule" id="MF_01326"/>
    </source>
</evidence>
<evidence type="ECO:0000256" key="2">
    <source>
        <dbReference type="SAM" id="MobiDB-lite"/>
    </source>
</evidence>
<evidence type="ECO:0000305" key="3"/>
<comment type="function">
    <text evidence="1">One of two assembly initiator proteins, it binds directly to the 5'-end of the 23S rRNA, where it nucleates assembly of the 50S subunit.</text>
</comment>
<comment type="function">
    <text evidence="1">One of the proteins that surrounds the polypeptide exit tunnel on the outside of the subunit.</text>
</comment>
<comment type="subunit">
    <text evidence="1">Part of the 50S ribosomal subunit.</text>
</comment>
<comment type="similarity">
    <text evidence="1">Belongs to the universal ribosomal protein uL24 family.</text>
</comment>